<dbReference type="EMBL" id="CM003146">
    <property type="protein sequence ID" value="KIS69106.1"/>
    <property type="molecule type" value="Genomic_DNA"/>
</dbReference>
<dbReference type="RefSeq" id="XP_011389517.1">
    <molecule id="A0A0D1DZT6-2"/>
    <property type="nucleotide sequence ID" value="XM_011391215.1"/>
</dbReference>
<dbReference type="FunCoup" id="A0A0D1DZT6">
    <property type="interactions" value="254"/>
</dbReference>
<dbReference type="STRING" id="237631.A0A0D1DZT6"/>
<dbReference type="EnsemblFungi" id="KIS69106">
    <molecule id="A0A0D1DZT6-2"/>
    <property type="protein sequence ID" value="KIS69106"/>
    <property type="gene ID" value="UMAG_10375"/>
</dbReference>
<dbReference type="GeneID" id="23566418"/>
<dbReference type="KEGG" id="uma:UMAG_10375"/>
<dbReference type="VEuPathDB" id="FungiDB:UMAG_10375"/>
<dbReference type="eggNOG" id="KOG0118">
    <property type="taxonomic scope" value="Eukaryota"/>
</dbReference>
<dbReference type="InParanoid" id="A0A0D1DZT6"/>
<dbReference type="OMA" id="ERITIWL"/>
<dbReference type="OrthoDB" id="1049195at2759"/>
<dbReference type="Proteomes" id="UP000000561">
    <property type="component" value="Chromosome 7"/>
</dbReference>
<dbReference type="GO" id="GO:0005737">
    <property type="term" value="C:cytoplasm"/>
    <property type="evidence" value="ECO:0000318"/>
    <property type="project" value="GO_Central"/>
</dbReference>
<dbReference type="GO" id="GO:0005634">
    <property type="term" value="C:nucleus"/>
    <property type="evidence" value="ECO:0000314"/>
    <property type="project" value="UniProtKB"/>
</dbReference>
<dbReference type="GO" id="GO:1990904">
    <property type="term" value="C:ribonucleoprotein complex"/>
    <property type="evidence" value="ECO:0000318"/>
    <property type="project" value="GO_Central"/>
</dbReference>
<dbReference type="GO" id="GO:0003729">
    <property type="term" value="F:mRNA binding"/>
    <property type="evidence" value="ECO:0000318"/>
    <property type="project" value="GO_Central"/>
</dbReference>
<dbReference type="GO" id="GO:0003723">
    <property type="term" value="F:RNA binding"/>
    <property type="evidence" value="ECO:0000314"/>
    <property type="project" value="UniProtKB"/>
</dbReference>
<dbReference type="GO" id="GO:0071028">
    <property type="term" value="P:nuclear mRNA surveillance"/>
    <property type="evidence" value="ECO:0000316"/>
    <property type="project" value="UniProtKB"/>
</dbReference>
<dbReference type="GO" id="GO:0016973">
    <property type="term" value="P:poly(A)+ mRNA export from nucleus"/>
    <property type="evidence" value="ECO:0000316"/>
    <property type="project" value="UniProtKB"/>
</dbReference>
<dbReference type="FunFam" id="3.30.70.330:FF:002140">
    <property type="match status" value="1"/>
</dbReference>
<dbReference type="FunFam" id="3.30.70.330:FF:002161">
    <property type="match status" value="1"/>
</dbReference>
<dbReference type="Gene3D" id="3.30.70.330">
    <property type="match status" value="4"/>
</dbReference>
<dbReference type="InterPro" id="IPR012677">
    <property type="entry name" value="Nucleotide-bd_a/b_plait_sf"/>
</dbReference>
<dbReference type="InterPro" id="IPR035979">
    <property type="entry name" value="RBD_domain_sf"/>
</dbReference>
<dbReference type="InterPro" id="IPR000504">
    <property type="entry name" value="RRM_dom"/>
</dbReference>
<dbReference type="InterPro" id="IPR050374">
    <property type="entry name" value="RRT5_SRSF_SR"/>
</dbReference>
<dbReference type="PANTHER" id="PTHR23003">
    <property type="entry name" value="RNA RECOGNITION MOTIF RRM DOMAIN CONTAINING PROTEIN"/>
    <property type="match status" value="1"/>
</dbReference>
<dbReference type="Pfam" id="PF00076">
    <property type="entry name" value="RRM_1"/>
    <property type="match status" value="3"/>
</dbReference>
<dbReference type="SMART" id="SM00360">
    <property type="entry name" value="RRM"/>
    <property type="match status" value="3"/>
</dbReference>
<dbReference type="SUPFAM" id="SSF54928">
    <property type="entry name" value="RNA-binding domain, RBD"/>
    <property type="match status" value="4"/>
</dbReference>
<dbReference type="PROSITE" id="PS50102">
    <property type="entry name" value="RRM"/>
    <property type="match status" value="3"/>
</dbReference>
<reference evidence="11" key="1">
    <citation type="journal article" date="2006" name="Nature">
        <title>Insights from the genome of the biotrophic fungal plant pathogen Ustilago maydis.</title>
        <authorList>
            <person name="Kaemper J."/>
            <person name="Kahmann R."/>
            <person name="Boelker M."/>
            <person name="Ma L.-J."/>
            <person name="Brefort T."/>
            <person name="Saville B.J."/>
            <person name="Banuett F."/>
            <person name="Kronstad J.W."/>
            <person name="Gold S.E."/>
            <person name="Mueller O."/>
            <person name="Perlin M.H."/>
            <person name="Woesten H.A.B."/>
            <person name="de Vries R."/>
            <person name="Ruiz-Herrera J."/>
            <person name="Reynaga-Pena C.G."/>
            <person name="Snetselaar K."/>
            <person name="McCann M."/>
            <person name="Perez-Martin J."/>
            <person name="Feldbruegge M."/>
            <person name="Basse C.W."/>
            <person name="Steinberg G."/>
            <person name="Ibeas J.I."/>
            <person name="Holloman W."/>
            <person name="Guzman P."/>
            <person name="Farman M.L."/>
            <person name="Stajich J.E."/>
            <person name="Sentandreu R."/>
            <person name="Gonzalez-Prieto J.M."/>
            <person name="Kennell J.C."/>
            <person name="Molina L."/>
            <person name="Schirawski J."/>
            <person name="Mendoza-Mendoza A."/>
            <person name="Greilinger D."/>
            <person name="Muench K."/>
            <person name="Roessel N."/>
            <person name="Scherer M."/>
            <person name="Vranes M."/>
            <person name="Ladendorf O."/>
            <person name="Vincon V."/>
            <person name="Fuchs U."/>
            <person name="Sandrock B."/>
            <person name="Meng S."/>
            <person name="Ho E.C.H."/>
            <person name="Cahill M.J."/>
            <person name="Boyce K.J."/>
            <person name="Klose J."/>
            <person name="Klosterman S.J."/>
            <person name="Deelstra H.J."/>
            <person name="Ortiz-Castellanos L."/>
            <person name="Li W."/>
            <person name="Sanchez-Alonso P."/>
            <person name="Schreier P.H."/>
            <person name="Haeuser-Hahn I."/>
            <person name="Vaupel M."/>
            <person name="Koopmann E."/>
            <person name="Friedrich G."/>
            <person name="Voss H."/>
            <person name="Schlueter T."/>
            <person name="Margolis J."/>
            <person name="Platt D."/>
            <person name="Swimmer C."/>
            <person name="Gnirke A."/>
            <person name="Chen F."/>
            <person name="Vysotskaia V."/>
            <person name="Mannhaupt G."/>
            <person name="Gueldener U."/>
            <person name="Muensterkoetter M."/>
            <person name="Haase D."/>
            <person name="Oesterheld M."/>
            <person name="Mewes H.-W."/>
            <person name="Mauceli E.W."/>
            <person name="DeCaprio D."/>
            <person name="Wade C.M."/>
            <person name="Butler J."/>
            <person name="Young S.K."/>
            <person name="Jaffe D.B."/>
            <person name="Calvo S.E."/>
            <person name="Nusbaum C."/>
            <person name="Galagan J.E."/>
            <person name="Birren B.W."/>
        </authorList>
    </citation>
    <scope>NUCLEOTIDE SEQUENCE [LARGE SCALE GENOMIC DNA]</scope>
    <source>
        <strain evidence="11">DSM 14603 / FGSC 9021 / UM521</strain>
    </source>
</reference>
<reference evidence="11" key="2">
    <citation type="submission" date="2014-09" db="EMBL/GenBank/DDBJ databases">
        <authorList>
            <person name="Gueldener U."/>
            <person name="Muensterkoetter M."/>
            <person name="Walter M.C."/>
            <person name="Mannhaupt G."/>
            <person name="Kahmann R."/>
        </authorList>
    </citation>
    <scope>GENOME REANNOTATION</scope>
    <source>
        <strain evidence="11">DSM 14603 / FGSC 9021 / UM521</strain>
    </source>
</reference>
<reference evidence="9" key="3">
    <citation type="journal article" date="2012" name="Microbiol. Res.">
        <title>Isolation of UmRrm75, a gene involved in dimorphism and virulence of Ustilago maydis.</title>
        <authorList>
            <person name="Rodriguez-Kessler M."/>
            <person name="Baeza-Montanez L."/>
            <person name="Garcia-Pedrajas M.D."/>
            <person name="Tapia-Moreno A."/>
            <person name="Gold S."/>
            <person name="Jimenez-Bremont J.F."/>
            <person name="Ruiz-Herrera J."/>
        </authorList>
    </citation>
    <scope>ALTERNATIVE SPLICING</scope>
    <scope>INDUCTION</scope>
    <scope>DISRUPTION PHENOTYPE</scope>
</reference>
<reference evidence="9" key="4">
    <citation type="journal article" date="2019" name="Sci. Rep.">
        <title>The Ustilago maydis null mutant strains of the RNA-binding protein UmRrm75 accumulate hydrogen peroxide and melanin.</title>
        <authorList>
            <person name="Rodriguez-Pina A.L."/>
            <person name="Juarez-Montiel M."/>
            <person name="Hernandez-Sanchez I.E."/>
            <person name="Rodriguez-Hernandez A.A."/>
            <person name="Bautista E."/>
            <person name="Becerra-Flora A."/>
            <person name="Lopez-Villegas E.O."/>
            <person name="Jimenez-Bremont J.F."/>
        </authorList>
    </citation>
    <scope>FUNCTION</scope>
    <scope>INDUCTION</scope>
    <scope>DISRUPTION PHENOTYPE</scope>
</reference>
<reference evidence="9" key="5">
    <citation type="journal article" date="2023" name="Int. Microbiol.">
        <title>The serine-arginine (SR) protein UmRrm75 from Ustilago maydis is a functional ortholog of yeast ScHrb1.</title>
        <authorList>
            <person name="Rodriguez-Pina A.L."/>
            <person name="Castano de la Serna E."/>
            <person name="Jimenez-Bremont J.F."/>
        </authorList>
    </citation>
    <scope>FUNCTION</scope>
    <scope>SUBCELLULAR LOCATION</scope>
    <scope>DISRUPTION PHENOTYPE</scope>
</reference>
<name>GBP2_MYCMD</name>
<organism evidence="11">
    <name type="scientific">Mycosarcoma maydis</name>
    <name type="common">Corn smut fungus</name>
    <name type="synonym">Ustilago maydis</name>
    <dbReference type="NCBI Taxonomy" id="5270"/>
    <lineage>
        <taxon>Eukaryota</taxon>
        <taxon>Fungi</taxon>
        <taxon>Dikarya</taxon>
        <taxon>Basidiomycota</taxon>
        <taxon>Ustilaginomycotina</taxon>
        <taxon>Ustilaginomycetes</taxon>
        <taxon>Ustilaginales</taxon>
        <taxon>Ustilaginaceae</taxon>
        <taxon>Mycosarcoma</taxon>
    </lineage>
</organism>
<keyword id="KW-0025">Alternative splicing</keyword>
<keyword id="KW-0539">Nucleus</keyword>
<keyword id="KW-1185">Reference proteome</keyword>
<keyword id="KW-0677">Repeat</keyword>
<keyword id="KW-0694">RNA-binding</keyword>
<evidence type="ECO:0000250" key="1">
    <source>
        <dbReference type="UniProtKB" id="P25555"/>
    </source>
</evidence>
<evidence type="ECO:0000250" key="2">
    <source>
        <dbReference type="UniProtKB" id="P38922"/>
    </source>
</evidence>
<evidence type="ECO:0000255" key="3">
    <source>
        <dbReference type="PROSITE-ProRule" id="PRU00176"/>
    </source>
</evidence>
<evidence type="ECO:0000256" key="4">
    <source>
        <dbReference type="SAM" id="MobiDB-lite"/>
    </source>
</evidence>
<evidence type="ECO:0000269" key="5">
    <source>
    </source>
</evidence>
<evidence type="ECO:0000269" key="6">
    <source>
    </source>
</evidence>
<evidence type="ECO:0000269" key="7">
    <source>
    </source>
</evidence>
<evidence type="ECO:0000303" key="8">
    <source>
    </source>
</evidence>
<evidence type="ECO:0000305" key="9"/>
<evidence type="ECO:0000312" key="10">
    <source>
        <dbReference type="EMBL" id="KIS69106.1"/>
    </source>
</evidence>
<evidence type="ECO:0000312" key="11">
    <source>
        <dbReference type="Proteomes" id="UP000000561"/>
    </source>
</evidence>
<comment type="function">
    <text evidence="2 6 7">Binds to intron-containing transcripts and is involved in quality control for the export of spliced mRNAs from the nucleus (PubMed:31346214, PubMed:37776379). Binds to pre-mRNAs until splicing is completed or until faulty mRNAs are degraded (By similarity).</text>
</comment>
<comment type="subcellular location">
    <subcellularLocation>
        <location evidence="7">Nucleus</location>
    </subcellularLocation>
    <text evidence="7">Localizes to the nucleus in both hyphae and yeast.</text>
</comment>
<comment type="alternative products">
    <event type="alternative splicing"/>
    <isoform>
        <id>A0A0D1DZT6-1</id>
        <name evidence="5">1</name>
        <sequence type="displayed"/>
    </isoform>
    <isoform>
        <id>A0A0D1DZT6-2</id>
        <name evidence="5">2</name>
        <name evidence="5">UmRrm75-B</name>
        <sequence type="described" ref="VSP_062330"/>
    </isoform>
</comment>
<comment type="induction">
    <text evidence="5 6">Increased in the filamentous form induced by acid pH (PubMed:22154329). Increased during thermal and cold stress (PubMed:31346214).</text>
</comment>
<comment type="disruption phenotype">
    <text evidence="5 6 7">Cells appear vacuolated with a cell separation defect (PubMed:22154329). Leads to abnormal mating (PubMed:22154329). Cells accumulate melanin and hydrogen peroxide, leading to activation of oxidative stress responses (PubMed:31346214). Sensitive to hydrogen peroxide and boron (PubMed:31346214, PubMed:37776379). Decreases cell population growth (PubMed:22154329, PubMed:31346214, PubMed:37776379). Decreases virulence in Z.mays (PubMed:22154329).</text>
</comment>
<sequence>MSEVEYNQENTHYAEVDNFDRDAMSQTRARSRSPVAGGAPSSDRRDRDRTDRTDRTDRSDRPRSFNDRAIASQHAATQASRKSQKNCRVYVGNLSYGVKWNTLKDFMREAVDVLLGDTRDGSITRARNASAARWLNESRRQCGWIADGKVLRFCPGWVTGGILQHLNHVRVAIQHSTRFPSFHRQPSIVYTAGHVVFSEVLTLPNGSSKGCGIVEYSTPEEAQKAIREMTNKQLEGRQVFVREDREDEVRYGTSPGGPPRGGGRGGLGGSSGRGSFGPPVRGGFYGGPPPPPYGGFGGGAPTQLFIGNLPFDVSWQDLKDLFRSAGNITRADINMGHDGRSKGSGIVAYADSNDASNAIAMYHGYEFRGRMLEVRLDKFASAPPMDPYGRAGYGPPPRGGRGGFGGAYGGRGGYGGRGGYGSGYGDPYGGGYSHEAYGGAYGGGYGGGYGDRHGAAGGYSTRASGPTSARAPAPPAAPSQQIFVKNLPWSTSNEDLVELFQTTGKVDEAEIVIGGGRSKGCGVVQFATVEDAETAIAKFNNYVYGGRPLDIEFNRRWTKFGTGGGSVNGGNDGNAPMVEVSAQDDEDGDAPVPMQG</sequence>
<accession>A0A0D1DZT6</accession>
<protein>
    <recommendedName>
        <fullName evidence="1">Serine/arginine (SR)-type shuttling mRNA binding protein</fullName>
    </recommendedName>
    <alternativeName>
        <fullName evidence="8">UmRRM75</fullName>
    </alternativeName>
</protein>
<feature type="chain" id="PRO_0000460455" description="Serine/arginine (SR)-type shuttling mRNA binding protein">
    <location>
        <begin position="1"/>
        <end position="596"/>
    </location>
</feature>
<feature type="domain" description="RRM 1" evidence="3">
    <location>
        <begin position="182"/>
        <end position="246"/>
    </location>
</feature>
<feature type="domain" description="RRM 2" evidence="3">
    <location>
        <begin position="302"/>
        <end position="379"/>
    </location>
</feature>
<feature type="domain" description="RRM 3" evidence="3">
    <location>
        <begin position="480"/>
        <end position="556"/>
    </location>
</feature>
<feature type="region of interest" description="Disordered" evidence="4">
    <location>
        <begin position="1"/>
        <end position="83"/>
    </location>
</feature>
<feature type="region of interest" description="Disordered" evidence="4">
    <location>
        <begin position="244"/>
        <end position="279"/>
    </location>
</feature>
<feature type="region of interest" description="Disordered" evidence="4">
    <location>
        <begin position="458"/>
        <end position="478"/>
    </location>
</feature>
<feature type="region of interest" description="Disordered" evidence="4">
    <location>
        <begin position="563"/>
        <end position="596"/>
    </location>
</feature>
<feature type="compositionally biased region" description="Polar residues" evidence="4">
    <location>
        <begin position="1"/>
        <end position="11"/>
    </location>
</feature>
<feature type="compositionally biased region" description="Basic and acidic residues" evidence="4">
    <location>
        <begin position="12"/>
        <end position="23"/>
    </location>
</feature>
<feature type="compositionally biased region" description="Basic and acidic residues" evidence="4">
    <location>
        <begin position="42"/>
        <end position="66"/>
    </location>
</feature>
<feature type="compositionally biased region" description="Gly residues" evidence="4">
    <location>
        <begin position="259"/>
        <end position="275"/>
    </location>
</feature>
<feature type="compositionally biased region" description="Gly residues" evidence="4">
    <location>
        <begin position="563"/>
        <end position="572"/>
    </location>
</feature>
<feature type="splice variant" id="VSP_062330" description="In isoform 2." evidence="5">
    <location>
        <begin position="111"/>
        <end position="192"/>
    </location>
</feature>
<proteinExistence type="evidence at transcript level"/>
<gene>
    <name evidence="8" type="primary">RRM75</name>
    <name evidence="10" type="ORF">UMAG_10375</name>
</gene>